<organism>
    <name type="scientific">Homo sapiens</name>
    <name type="common">Human</name>
    <dbReference type="NCBI Taxonomy" id="9606"/>
    <lineage>
        <taxon>Eukaryota</taxon>
        <taxon>Metazoa</taxon>
        <taxon>Chordata</taxon>
        <taxon>Craniata</taxon>
        <taxon>Vertebrata</taxon>
        <taxon>Euteleostomi</taxon>
        <taxon>Mammalia</taxon>
        <taxon>Eutheria</taxon>
        <taxon>Euarchontoglires</taxon>
        <taxon>Primates</taxon>
        <taxon>Haplorrhini</taxon>
        <taxon>Catarrhini</taxon>
        <taxon>Hominidae</taxon>
        <taxon>Homo</taxon>
    </lineage>
</organism>
<proteinExistence type="evidence at protein level"/>
<evidence type="ECO:0000250" key="1">
    <source>
        <dbReference type="UniProtKB" id="Q9EQ00"/>
    </source>
</evidence>
<evidence type="ECO:0000269" key="2">
    <source>
    </source>
</evidence>
<evidence type="ECO:0000269" key="3">
    <source>
    </source>
</evidence>
<evidence type="ECO:0000269" key="4">
    <source>
    </source>
</evidence>
<evidence type="ECO:0000303" key="5">
    <source>
    </source>
</evidence>
<evidence type="ECO:0000305" key="6"/>
<comment type="function">
    <text evidence="1">Functions as part of axonemal radial spoke complexes that play an important part in the motility of sperm and cilia. Important for male fertility. With ROPN1, involved in fibrous sheath integrity and sperm motility, plays a role in PKA-dependent signaling processes required for spermatozoa capacitation.</text>
</comment>
<comment type="subunit">
    <text evidence="1 2">Component of the axonemal radial spoke complex 1 (RS1), at least composed of spoke head proteins RSPH1, RSPH3, RSPH9 and the cilia-specific component RSPH4A or sperm-specific component RSPH6A, spoke stalk proteins RSPH14, DNAJB13, DYDC1, ROPN1L and NME5, and the anchor protein IQUB (By similarity). Interacts with FSCB; the interaction increases upon spermatozoa capacitation conditions (By similarity). May interact with AKAP3 (PubMed:11278869). Interacts with CFAP61 (By similarity).</text>
</comment>
<comment type="interaction">
    <interactant intactId="EBI-9033237">
        <id>Q96C74</id>
    </interactant>
    <interactant intactId="EBI-2119626">
        <id>Q86UN6</id>
        <label>AKAP14</label>
    </interactant>
    <organismsDiffer>false</organismsDiffer>
    <experiments>3</experiments>
</comment>
<comment type="interaction">
    <interactant intactId="EBI-9033237">
        <id>Q96C74</id>
    </interactant>
    <interactant intactId="EBI-703640">
        <id>P24588</id>
        <label>AKAP5</label>
    </interactant>
    <organismsDiffer>false</organismsDiffer>
    <experiments>3</experiments>
</comment>
<comment type="interaction">
    <interactant intactId="EBI-9033237">
        <id>Q96C74</id>
    </interactant>
    <interactant intactId="EBI-10185182">
        <id>O43687-2</id>
        <label>AKAP7</label>
    </interactant>
    <organismsDiffer>false</organismsDiffer>
    <experiments>3</experiments>
</comment>
<comment type="interaction">
    <interactant intactId="EBI-9033237">
        <id>Q96C74</id>
    </interactant>
    <interactant intactId="EBI-745073">
        <id>Q9BXY8</id>
        <label>BEX2</label>
    </interactant>
    <organismsDiffer>false</organismsDiffer>
    <experiments>3</experiments>
</comment>
<comment type="interaction">
    <interactant intactId="EBI-9033237">
        <id>Q96C74</id>
    </interactant>
    <interactant intactId="EBI-9033237">
        <id>Q96C74</id>
        <label>ROPN1L</label>
    </interactant>
    <organismsDiffer>false</organismsDiffer>
    <experiments>3</experiments>
</comment>
<comment type="interaction">
    <interactant intactId="EBI-9033237">
        <id>Q96C74</id>
    </interactant>
    <interactant intactId="EBI-6873025">
        <id>Q86UC2</id>
        <label>RSPH3</label>
    </interactant>
    <organismsDiffer>false</organismsDiffer>
    <experiments>7</experiments>
</comment>
<comment type="interaction">
    <interactant intactId="EBI-9033237">
        <id>Q96C74</id>
    </interactant>
    <interactant intactId="EBI-1377865">
        <id>Q15506</id>
        <label>SPA17</label>
    </interactant>
    <organismsDiffer>false</organismsDiffer>
    <experiments>5</experiments>
</comment>
<comment type="subcellular location">
    <subcellularLocation>
        <location evidence="1">Cell projection</location>
        <location evidence="1">Cilium</location>
        <location evidence="1">Flagellum</location>
    </subcellularLocation>
    <subcellularLocation>
        <location evidence="4">Cell projection</location>
        <location evidence="4">Cilium</location>
    </subcellularLocation>
</comment>
<comment type="PTM">
    <text evidence="1">Sumoylated, sumoylation decreases upon spermatozoa capacitation conditions.</text>
</comment>
<comment type="similarity">
    <text evidence="6">Belongs to the ropporin family.</text>
</comment>
<keyword id="KW-0002">3D-structure</keyword>
<keyword id="KW-0966">Cell projection</keyword>
<keyword id="KW-0969">Cilium</keyword>
<keyword id="KW-0282">Flagellum</keyword>
<keyword id="KW-1267">Proteomics identification</keyword>
<keyword id="KW-1185">Reference proteome</keyword>
<keyword id="KW-0832">Ubl conjugation</keyword>
<feature type="chain" id="PRO_0000307398" description="Ropporin-1-like protein">
    <location>
        <begin position="1"/>
        <end position="230"/>
    </location>
</feature>
<feature type="domain" description="RIIa">
    <location>
        <begin position="17"/>
        <end position="46"/>
    </location>
</feature>
<feature type="sequence variant" id="VAR_035442" description="In dbSNP:rs35573613.">
    <original>N</original>
    <variation>K</variation>
    <location>
        <position position="103"/>
    </location>
</feature>
<feature type="sequence variant" id="VAR_057789" description="In dbSNP:rs2303986.">
    <original>A</original>
    <variation>V</variation>
    <location>
        <position position="113"/>
    </location>
</feature>
<feature type="sequence variant" id="VAR_035443" description="In dbSNP:rs17851209." evidence="3">
    <original>P</original>
    <variation>R</variation>
    <location>
        <position position="156"/>
    </location>
</feature>
<accession>Q96C74</accession>
<accession>D3DTC9</accession>
<accession>Q9BZX0</accession>
<protein>
    <recommendedName>
        <fullName>Ropporin-1-like protein</fullName>
        <shortName>ROPN1-like protein</shortName>
    </recommendedName>
    <alternativeName>
        <fullName>AKAP-associated sperm protein</fullName>
    </alternativeName>
</protein>
<gene>
    <name type="primary">ROPN1L</name>
    <name type="synonym">ASP</name>
    <name evidence="5" type="synonym">RSPH11</name>
</gene>
<dbReference type="EMBL" id="AF239723">
    <property type="protein sequence ID" value="AAG59587.1"/>
    <property type="molecule type" value="mRNA"/>
</dbReference>
<dbReference type="EMBL" id="AC092336">
    <property type="status" value="NOT_ANNOTATED_CDS"/>
    <property type="molecule type" value="Genomic_DNA"/>
</dbReference>
<dbReference type="EMBL" id="CH471102">
    <property type="protein sequence ID" value="EAX08063.1"/>
    <property type="molecule type" value="Genomic_DNA"/>
</dbReference>
<dbReference type="EMBL" id="CH471102">
    <property type="protein sequence ID" value="EAX08064.1"/>
    <property type="molecule type" value="Genomic_DNA"/>
</dbReference>
<dbReference type="EMBL" id="BC014607">
    <property type="protein sequence ID" value="AAH14607.1"/>
    <property type="molecule type" value="mRNA"/>
</dbReference>
<dbReference type="CCDS" id="CCDS3879.1"/>
<dbReference type="RefSeq" id="NP_001188395.1">
    <property type="nucleotide sequence ID" value="NM_001201466.2"/>
</dbReference>
<dbReference type="RefSeq" id="NP_114122.2">
    <property type="nucleotide sequence ID" value="NM_031916.4"/>
</dbReference>
<dbReference type="PDB" id="8J07">
    <property type="method" value="EM"/>
    <property type="resolution" value="4.10 A"/>
    <property type="chains" value="Q/R/q/r=1-230"/>
</dbReference>
<dbReference type="PDBsum" id="8J07"/>
<dbReference type="EMDB" id="EMD-35888"/>
<dbReference type="SMR" id="Q96C74"/>
<dbReference type="BioGRID" id="123769">
    <property type="interactions" value="12"/>
</dbReference>
<dbReference type="ComplexPortal" id="CPX-8163">
    <property type="entry name" value="Radial spoke complex, ciliiar variant"/>
</dbReference>
<dbReference type="ComplexPortal" id="CPX-8164">
    <property type="entry name" value="Radial spoke complex, flagellar variant"/>
</dbReference>
<dbReference type="FunCoup" id="Q96C74">
    <property type="interactions" value="91"/>
</dbReference>
<dbReference type="IntAct" id="Q96C74">
    <property type="interactions" value="10"/>
</dbReference>
<dbReference type="STRING" id="9606.ENSP00000421405"/>
<dbReference type="GlyCosmos" id="Q96C74">
    <property type="glycosylation" value="1 site, 1 glycan"/>
</dbReference>
<dbReference type="GlyGen" id="Q96C74">
    <property type="glycosylation" value="1 site, 1 O-linked glycan (1 site)"/>
</dbReference>
<dbReference type="iPTMnet" id="Q96C74"/>
<dbReference type="PhosphoSitePlus" id="Q96C74"/>
<dbReference type="BioMuta" id="ROPN1L"/>
<dbReference type="DMDM" id="296452880"/>
<dbReference type="jPOST" id="Q96C74"/>
<dbReference type="MassIVE" id="Q96C74"/>
<dbReference type="PaxDb" id="9606-ENSP00000421405"/>
<dbReference type="PeptideAtlas" id="Q96C74"/>
<dbReference type="ProteomicsDB" id="76162"/>
<dbReference type="Antibodypedia" id="22503">
    <property type="antibodies" value="178 antibodies from 23 providers"/>
</dbReference>
<dbReference type="DNASU" id="83853"/>
<dbReference type="Ensembl" id="ENST00000274134.5">
    <property type="protein sequence ID" value="ENSP00000274134.4"/>
    <property type="gene ID" value="ENSG00000145491.13"/>
</dbReference>
<dbReference type="Ensembl" id="ENST00000503804.5">
    <property type="protein sequence ID" value="ENSP00000421405.1"/>
    <property type="gene ID" value="ENSG00000145491.13"/>
</dbReference>
<dbReference type="GeneID" id="83853"/>
<dbReference type="KEGG" id="hsa:83853"/>
<dbReference type="MANE-Select" id="ENST00000274134.5">
    <property type="protein sequence ID" value="ENSP00000274134.4"/>
    <property type="RefSeq nucleotide sequence ID" value="NM_031916.5"/>
    <property type="RefSeq protein sequence ID" value="NP_114122.2"/>
</dbReference>
<dbReference type="UCSC" id="uc003jex.5">
    <property type="organism name" value="human"/>
</dbReference>
<dbReference type="AGR" id="HGNC:24060"/>
<dbReference type="CTD" id="83853"/>
<dbReference type="DisGeNET" id="83853"/>
<dbReference type="GeneCards" id="ROPN1L"/>
<dbReference type="HGNC" id="HGNC:24060">
    <property type="gene designation" value="ROPN1L"/>
</dbReference>
<dbReference type="HPA" id="ENSG00000145491">
    <property type="expression patterns" value="Tissue enriched (testis)"/>
</dbReference>
<dbReference type="MIM" id="611756">
    <property type="type" value="gene"/>
</dbReference>
<dbReference type="neXtProt" id="NX_Q96C74"/>
<dbReference type="OpenTargets" id="ENSG00000145491"/>
<dbReference type="PharmGKB" id="PA134956127"/>
<dbReference type="VEuPathDB" id="HostDB:ENSG00000145491"/>
<dbReference type="eggNOG" id="ENOG502QTNR">
    <property type="taxonomic scope" value="Eukaryota"/>
</dbReference>
<dbReference type="GeneTree" id="ENSGT00390000012731"/>
<dbReference type="HOGENOM" id="CLU_069829_1_0_1"/>
<dbReference type="InParanoid" id="Q96C74"/>
<dbReference type="OMA" id="QWSSAYF"/>
<dbReference type="OrthoDB" id="10067602at2759"/>
<dbReference type="PAN-GO" id="Q96C74">
    <property type="GO annotations" value="3 GO annotations based on evolutionary models"/>
</dbReference>
<dbReference type="PhylomeDB" id="Q96C74"/>
<dbReference type="TreeFam" id="TF105421"/>
<dbReference type="PathwayCommons" id="Q96C74"/>
<dbReference type="SignaLink" id="Q96C74"/>
<dbReference type="BioGRID-ORCS" id="83853">
    <property type="hits" value="18 hits in 1147 CRISPR screens"/>
</dbReference>
<dbReference type="GenomeRNAi" id="83853"/>
<dbReference type="Pharos" id="Q96C74">
    <property type="development level" value="Tbio"/>
</dbReference>
<dbReference type="PRO" id="PR:Q96C74"/>
<dbReference type="Proteomes" id="UP000005640">
    <property type="component" value="Chromosome 5"/>
</dbReference>
<dbReference type="RNAct" id="Q96C74">
    <property type="molecule type" value="protein"/>
</dbReference>
<dbReference type="Bgee" id="ENSG00000145491">
    <property type="expression patterns" value="Expressed in left testis and 109 other cell types or tissues"/>
</dbReference>
<dbReference type="GO" id="GO:0005929">
    <property type="term" value="C:cilium"/>
    <property type="evidence" value="ECO:0000314"/>
    <property type="project" value="UniProtKB"/>
</dbReference>
<dbReference type="GO" id="GO:0005737">
    <property type="term" value="C:cytoplasm"/>
    <property type="evidence" value="ECO:0000314"/>
    <property type="project" value="BHF-UCL"/>
</dbReference>
<dbReference type="GO" id="GO:0005576">
    <property type="term" value="C:extracellular region"/>
    <property type="evidence" value="ECO:0007669"/>
    <property type="project" value="GOC"/>
</dbReference>
<dbReference type="GO" id="GO:0043231">
    <property type="term" value="C:intracellular membrane-bounded organelle"/>
    <property type="evidence" value="ECO:0000314"/>
    <property type="project" value="HPA"/>
</dbReference>
<dbReference type="GO" id="GO:0031514">
    <property type="term" value="C:motile cilium"/>
    <property type="evidence" value="ECO:0000314"/>
    <property type="project" value="BHF-UCL"/>
</dbReference>
<dbReference type="GO" id="GO:0005654">
    <property type="term" value="C:nucleoplasm"/>
    <property type="evidence" value="ECO:0000314"/>
    <property type="project" value="HPA"/>
</dbReference>
<dbReference type="GO" id="GO:0001534">
    <property type="term" value="C:radial spoke"/>
    <property type="evidence" value="ECO:0000250"/>
    <property type="project" value="UniProtKB"/>
</dbReference>
<dbReference type="GO" id="GO:0042802">
    <property type="term" value="F:identical protein binding"/>
    <property type="evidence" value="ECO:0000353"/>
    <property type="project" value="IntAct"/>
</dbReference>
<dbReference type="GO" id="GO:0003351">
    <property type="term" value="P:epithelial cilium movement involved in extracellular fluid movement"/>
    <property type="evidence" value="ECO:0000305"/>
    <property type="project" value="BHF-UCL"/>
</dbReference>
<dbReference type="GO" id="GO:0030317">
    <property type="term" value="P:flagellated sperm motility"/>
    <property type="evidence" value="ECO:0000250"/>
    <property type="project" value="UniProtKB"/>
</dbReference>
<dbReference type="GO" id="GO:0001932">
    <property type="term" value="P:regulation of protein phosphorylation"/>
    <property type="evidence" value="ECO:0000250"/>
    <property type="project" value="UniProtKB"/>
</dbReference>
<dbReference type="GO" id="GO:0048240">
    <property type="term" value="P:sperm capacitation"/>
    <property type="evidence" value="ECO:0000250"/>
    <property type="project" value="UniProtKB"/>
</dbReference>
<dbReference type="CDD" id="cd23019">
    <property type="entry name" value="DD_ROP"/>
    <property type="match status" value="1"/>
</dbReference>
<dbReference type="FunFam" id="1.20.890.10:FF:000004">
    <property type="entry name" value="ropporin-1-like protein isoform X2"/>
    <property type="match status" value="1"/>
</dbReference>
<dbReference type="Gene3D" id="1.20.890.10">
    <property type="entry name" value="cAMP-dependent protein kinase regulatory subunit, dimerization-anchoring domain"/>
    <property type="match status" value="1"/>
</dbReference>
<dbReference type="InterPro" id="IPR047844">
    <property type="entry name" value="ROP_DD"/>
</dbReference>
<dbReference type="PANTHER" id="PTHR14952">
    <property type="entry name" value="ROPPORIN-1-LIKE PROTEIN"/>
    <property type="match status" value="1"/>
</dbReference>
<dbReference type="PANTHER" id="PTHR14952:SF14">
    <property type="entry name" value="ROPPORIN-1-LIKE PROTEIN"/>
    <property type="match status" value="1"/>
</dbReference>
<dbReference type="SUPFAM" id="SSF47391">
    <property type="entry name" value="Dimerization-anchoring domain of cAMP-dependent PK regulatory subunit"/>
    <property type="match status" value="1"/>
</dbReference>
<name>ROP1L_HUMAN</name>
<reference key="1">
    <citation type="journal article" date="2001" name="J. Biol. Chem.">
        <title>Identification of sperm-specific proteins that interact with A-kinase anchoring proteins in a manner similar to the type II regulatory subunit of PKA.</title>
        <authorList>
            <person name="Carr D.W."/>
            <person name="Fujita A."/>
            <person name="Stentz C.L."/>
            <person name="Liberty G.A."/>
            <person name="Olson G.E."/>
            <person name="Narumiya S."/>
        </authorList>
    </citation>
    <scope>NUCLEOTIDE SEQUENCE [MRNA]</scope>
    <scope>POSSIBLE INTERACTION WITH AKAP3</scope>
    <source>
        <tissue>Testis</tissue>
    </source>
</reference>
<reference key="2">
    <citation type="journal article" date="2004" name="Nature">
        <title>The DNA sequence and comparative analysis of human chromosome 5.</title>
        <authorList>
            <person name="Schmutz J."/>
            <person name="Martin J."/>
            <person name="Terry A."/>
            <person name="Couronne O."/>
            <person name="Grimwood J."/>
            <person name="Lowry S."/>
            <person name="Gordon L.A."/>
            <person name="Scott D."/>
            <person name="Xie G."/>
            <person name="Huang W."/>
            <person name="Hellsten U."/>
            <person name="Tran-Gyamfi M."/>
            <person name="She X."/>
            <person name="Prabhakar S."/>
            <person name="Aerts A."/>
            <person name="Altherr M."/>
            <person name="Bajorek E."/>
            <person name="Black S."/>
            <person name="Branscomb E."/>
            <person name="Caoile C."/>
            <person name="Challacombe J.F."/>
            <person name="Chan Y.M."/>
            <person name="Denys M."/>
            <person name="Detter J.C."/>
            <person name="Escobar J."/>
            <person name="Flowers D."/>
            <person name="Fotopulos D."/>
            <person name="Glavina T."/>
            <person name="Gomez M."/>
            <person name="Gonzales E."/>
            <person name="Goodstein D."/>
            <person name="Grigoriev I."/>
            <person name="Groza M."/>
            <person name="Hammon N."/>
            <person name="Hawkins T."/>
            <person name="Haydu L."/>
            <person name="Israni S."/>
            <person name="Jett J."/>
            <person name="Kadner K."/>
            <person name="Kimball H."/>
            <person name="Kobayashi A."/>
            <person name="Lopez F."/>
            <person name="Lou Y."/>
            <person name="Martinez D."/>
            <person name="Medina C."/>
            <person name="Morgan J."/>
            <person name="Nandkeshwar R."/>
            <person name="Noonan J.P."/>
            <person name="Pitluck S."/>
            <person name="Pollard M."/>
            <person name="Predki P."/>
            <person name="Priest J."/>
            <person name="Ramirez L."/>
            <person name="Retterer J."/>
            <person name="Rodriguez A."/>
            <person name="Rogers S."/>
            <person name="Salamov A."/>
            <person name="Salazar A."/>
            <person name="Thayer N."/>
            <person name="Tice H."/>
            <person name="Tsai M."/>
            <person name="Ustaszewska A."/>
            <person name="Vo N."/>
            <person name="Wheeler J."/>
            <person name="Wu K."/>
            <person name="Yang J."/>
            <person name="Dickson M."/>
            <person name="Cheng J.-F."/>
            <person name="Eichler E.E."/>
            <person name="Olsen A."/>
            <person name="Pennacchio L.A."/>
            <person name="Rokhsar D.S."/>
            <person name="Richardson P."/>
            <person name="Lucas S.M."/>
            <person name="Myers R.M."/>
            <person name="Rubin E.M."/>
        </authorList>
    </citation>
    <scope>NUCLEOTIDE SEQUENCE [LARGE SCALE GENOMIC DNA]</scope>
</reference>
<reference key="3">
    <citation type="submission" date="2005-09" db="EMBL/GenBank/DDBJ databases">
        <authorList>
            <person name="Mural R.J."/>
            <person name="Istrail S."/>
            <person name="Sutton G.G."/>
            <person name="Florea L."/>
            <person name="Halpern A.L."/>
            <person name="Mobarry C.M."/>
            <person name="Lippert R."/>
            <person name="Walenz B."/>
            <person name="Shatkay H."/>
            <person name="Dew I."/>
            <person name="Miller J.R."/>
            <person name="Flanigan M.J."/>
            <person name="Edwards N.J."/>
            <person name="Bolanos R."/>
            <person name="Fasulo D."/>
            <person name="Halldorsson B.V."/>
            <person name="Hannenhalli S."/>
            <person name="Turner R."/>
            <person name="Yooseph S."/>
            <person name="Lu F."/>
            <person name="Nusskern D.R."/>
            <person name="Shue B.C."/>
            <person name="Zheng X.H."/>
            <person name="Zhong F."/>
            <person name="Delcher A.L."/>
            <person name="Huson D.H."/>
            <person name="Kravitz S.A."/>
            <person name="Mouchard L."/>
            <person name="Reinert K."/>
            <person name="Remington K.A."/>
            <person name="Clark A.G."/>
            <person name="Waterman M.S."/>
            <person name="Eichler E.E."/>
            <person name="Adams M.D."/>
            <person name="Hunkapiller M.W."/>
            <person name="Myers E.W."/>
            <person name="Venter J.C."/>
        </authorList>
    </citation>
    <scope>NUCLEOTIDE SEQUENCE [LARGE SCALE GENOMIC DNA]</scope>
</reference>
<reference key="4">
    <citation type="journal article" date="2004" name="Genome Res.">
        <title>The status, quality, and expansion of the NIH full-length cDNA project: the Mammalian Gene Collection (MGC).</title>
        <authorList>
            <consortium name="The MGC Project Team"/>
        </authorList>
    </citation>
    <scope>NUCLEOTIDE SEQUENCE [LARGE SCALE MRNA]</scope>
    <scope>VARIANT ARG-156</scope>
    <source>
        <tissue>Brain</tissue>
    </source>
</reference>
<reference key="5">
    <citation type="journal article" date="2016" name="Hum. Mutat.">
        <title>Mutations in GAS8, a gene encoding a nexin-dynein regulatory complex subunit, cause primary ciliary dyskinesia with axonemal disorganization.</title>
        <authorList>
            <person name="Jeanson L."/>
            <person name="Thomas L."/>
            <person name="Copin B."/>
            <person name="Coste A."/>
            <person name="Sermet-Gaudelus I."/>
            <person name="Dastot-Le Moal F."/>
            <person name="Duquesnoy P."/>
            <person name="Montantin G."/>
            <person name="Collot N."/>
            <person name="Tissier S."/>
            <person name="Papon J.F."/>
            <person name="Clement A."/>
            <person name="Louis B."/>
            <person name="Escudier E."/>
            <person name="Amselem S."/>
            <person name="Legendre M."/>
        </authorList>
    </citation>
    <scope>SUBCELLULAR LOCATION</scope>
</reference>
<sequence length="230" mass="26107">MPLPDTMFCAQQIHIPPELPDILKQFTKAAIRTQPADVLRWSAGYFSALSRGDPLPVKDRMEMPTATQKTDTGLTQGLLKVLHKQCHHKRYVELTDLEQKWKNLCLPKEKFKALLQLDPCENKIKWINFLALGCSMLGGSLNTALKHLCEILTDDPEGGPARIPFKTFSYVYRYLARLDSDVSPLETESYLASLKENIDARKNGMIGLSDFFFPKRKLLESIENSEDVGH</sequence>